<gene>
    <name evidence="18" type="primary">ATP5F1B</name>
    <name evidence="18" type="synonym">ATP5B</name>
    <name type="synonym">ATPMB</name>
    <name evidence="18" type="synonym">ATPSB</name>
</gene>
<accession>P06576</accession>
<accession>A8K4X0</accession>
<accession>Q14283</accession>
<evidence type="ECO:0000250" key="1"/>
<evidence type="ECO:0000250" key="2">
    <source>
        <dbReference type="UniProtKB" id="P00829"/>
    </source>
</evidence>
<evidence type="ECO:0000250" key="3">
    <source>
        <dbReference type="UniProtKB" id="P10719"/>
    </source>
</evidence>
<evidence type="ECO:0000250" key="4">
    <source>
        <dbReference type="UniProtKB" id="P19483"/>
    </source>
</evidence>
<evidence type="ECO:0000250" key="5">
    <source>
        <dbReference type="UniProtKB" id="P56480"/>
    </source>
</evidence>
<evidence type="ECO:0000269" key="6">
    <source>
    </source>
</evidence>
<evidence type="ECO:0000269" key="7">
    <source>
    </source>
</evidence>
<evidence type="ECO:0000269" key="8">
    <source>
    </source>
</evidence>
<evidence type="ECO:0000269" key="9">
    <source>
    </source>
</evidence>
<evidence type="ECO:0000269" key="10">
    <source>
    </source>
</evidence>
<evidence type="ECO:0000269" key="11">
    <source>
    </source>
</evidence>
<evidence type="ECO:0000269" key="12">
    <source>
    </source>
</evidence>
<evidence type="ECO:0000269" key="13">
    <source>
    </source>
</evidence>
<evidence type="ECO:0000305" key="14"/>
<evidence type="ECO:0000305" key="15">
    <source>
    </source>
</evidence>
<evidence type="ECO:0000305" key="16">
    <source>
    </source>
</evidence>
<evidence type="ECO:0000305" key="17">
    <source>
    </source>
</evidence>
<evidence type="ECO:0000312" key="18">
    <source>
        <dbReference type="HGNC" id="HGNC:830"/>
    </source>
</evidence>
<evidence type="ECO:0007744" key="19">
    <source>
        <dbReference type="PDB" id="8H9E"/>
    </source>
</evidence>
<evidence type="ECO:0007744" key="20">
    <source>
        <dbReference type="PDB" id="8H9I"/>
    </source>
</evidence>
<evidence type="ECO:0007744" key="21">
    <source>
        <dbReference type="PDB" id="8H9L"/>
    </source>
</evidence>
<evidence type="ECO:0007744" key="22">
    <source>
        <dbReference type="PDB" id="8H9P"/>
    </source>
</evidence>
<evidence type="ECO:0007744" key="23">
    <source>
        <dbReference type="PDB" id="8H9S"/>
    </source>
</evidence>
<evidence type="ECO:0007744" key="24">
    <source>
        <dbReference type="PDB" id="8H9T"/>
    </source>
</evidence>
<evidence type="ECO:0007744" key="25">
    <source>
        <dbReference type="PDB" id="8H9U"/>
    </source>
</evidence>
<evidence type="ECO:0007744" key="26">
    <source>
        <dbReference type="PDB" id="8H9V"/>
    </source>
</evidence>
<evidence type="ECO:0007744" key="27">
    <source>
        <dbReference type="PDB" id="8KI3"/>
    </source>
</evidence>
<evidence type="ECO:0007744" key="28">
    <source>
    </source>
</evidence>
<evidence type="ECO:0007744" key="29">
    <source>
    </source>
</evidence>
<evidence type="ECO:0007744" key="30">
    <source>
    </source>
</evidence>
<evidence type="ECO:0007829" key="31">
    <source>
        <dbReference type="PDB" id="8H9V"/>
    </source>
</evidence>
<reference key="1">
    <citation type="journal article" date="1989" name="Genomics">
        <title>The human ATP synthase beta subunit gene: sequence analysis, chromosome assignment, and differential expression.</title>
        <authorList>
            <person name="Neckelmann N."/>
            <person name="Warner C.K."/>
            <person name="Chung A."/>
            <person name="Kudoh J."/>
            <person name="Minoshima S."/>
            <person name="Fukuyama R."/>
            <person name="Maekawa M."/>
            <person name="Shimizu Y."/>
            <person name="Shimizu N."/>
            <person name="Liu J.D."/>
            <person name="Wallace D.C."/>
        </authorList>
    </citation>
    <scope>NUCLEOTIDE SEQUENCE [GENOMIC DNA]</scope>
</reference>
<reference key="2">
    <citation type="journal article" date="1988" name="J. Biol. Chem.">
        <title>Gene structure of the human mitochondrial adenosine triphosphate synthase beta subunit.</title>
        <authorList>
            <person name="Ohta S."/>
            <person name="Tomura H."/>
            <person name="Matsuda K."/>
            <person name="Kagawa Y."/>
        </authorList>
    </citation>
    <scope>NUCLEOTIDE SEQUENCE [GENOMIC DNA]</scope>
    <scope>VARIANT GLN-274</scope>
</reference>
<reference key="3">
    <citation type="journal article" date="1986" name="J. Biochem.">
        <title>Human F1-ATPase: molecular cloning of cDNA for the beta subunit.</title>
        <authorList>
            <person name="Ohta S."/>
            <person name="Kagawa Y."/>
        </authorList>
    </citation>
    <scope>NUCLEOTIDE SEQUENCE [MRNA]</scope>
    <scope>VARIANT GLN-274</scope>
</reference>
<reference key="4">
    <citation type="journal article" date="2004" name="Nat. Genet.">
        <title>Complete sequencing and characterization of 21,243 full-length human cDNAs.</title>
        <authorList>
            <person name="Ota T."/>
            <person name="Suzuki Y."/>
            <person name="Nishikawa T."/>
            <person name="Otsuki T."/>
            <person name="Sugiyama T."/>
            <person name="Irie R."/>
            <person name="Wakamatsu A."/>
            <person name="Hayashi K."/>
            <person name="Sato H."/>
            <person name="Nagai K."/>
            <person name="Kimura K."/>
            <person name="Makita H."/>
            <person name="Sekine M."/>
            <person name="Obayashi M."/>
            <person name="Nishi T."/>
            <person name="Shibahara T."/>
            <person name="Tanaka T."/>
            <person name="Ishii S."/>
            <person name="Yamamoto J."/>
            <person name="Saito K."/>
            <person name="Kawai Y."/>
            <person name="Isono Y."/>
            <person name="Nakamura Y."/>
            <person name="Nagahari K."/>
            <person name="Murakami K."/>
            <person name="Yasuda T."/>
            <person name="Iwayanagi T."/>
            <person name="Wagatsuma M."/>
            <person name="Shiratori A."/>
            <person name="Sudo H."/>
            <person name="Hosoiri T."/>
            <person name="Kaku Y."/>
            <person name="Kodaira H."/>
            <person name="Kondo H."/>
            <person name="Sugawara M."/>
            <person name="Takahashi M."/>
            <person name="Kanda K."/>
            <person name="Yokoi T."/>
            <person name="Furuya T."/>
            <person name="Kikkawa E."/>
            <person name="Omura Y."/>
            <person name="Abe K."/>
            <person name="Kamihara K."/>
            <person name="Katsuta N."/>
            <person name="Sato K."/>
            <person name="Tanikawa M."/>
            <person name="Yamazaki M."/>
            <person name="Ninomiya K."/>
            <person name="Ishibashi T."/>
            <person name="Yamashita H."/>
            <person name="Murakawa K."/>
            <person name="Fujimori K."/>
            <person name="Tanai H."/>
            <person name="Kimata M."/>
            <person name="Watanabe M."/>
            <person name="Hiraoka S."/>
            <person name="Chiba Y."/>
            <person name="Ishida S."/>
            <person name="Ono Y."/>
            <person name="Takiguchi S."/>
            <person name="Watanabe S."/>
            <person name="Yosida M."/>
            <person name="Hotuta T."/>
            <person name="Kusano J."/>
            <person name="Kanehori K."/>
            <person name="Takahashi-Fujii A."/>
            <person name="Hara H."/>
            <person name="Tanase T.-O."/>
            <person name="Nomura Y."/>
            <person name="Togiya S."/>
            <person name="Komai F."/>
            <person name="Hara R."/>
            <person name="Takeuchi K."/>
            <person name="Arita M."/>
            <person name="Imose N."/>
            <person name="Musashino K."/>
            <person name="Yuuki H."/>
            <person name="Oshima A."/>
            <person name="Sasaki N."/>
            <person name="Aotsuka S."/>
            <person name="Yoshikawa Y."/>
            <person name="Matsunawa H."/>
            <person name="Ichihara T."/>
            <person name="Shiohata N."/>
            <person name="Sano S."/>
            <person name="Moriya S."/>
            <person name="Momiyama H."/>
            <person name="Satoh N."/>
            <person name="Takami S."/>
            <person name="Terashima Y."/>
            <person name="Suzuki O."/>
            <person name="Nakagawa S."/>
            <person name="Senoh A."/>
            <person name="Mizoguchi H."/>
            <person name="Goto Y."/>
            <person name="Shimizu F."/>
            <person name="Wakebe H."/>
            <person name="Hishigaki H."/>
            <person name="Watanabe T."/>
            <person name="Sugiyama A."/>
            <person name="Takemoto M."/>
            <person name="Kawakami B."/>
            <person name="Yamazaki M."/>
            <person name="Watanabe K."/>
            <person name="Kumagai A."/>
            <person name="Itakura S."/>
            <person name="Fukuzumi Y."/>
            <person name="Fujimori Y."/>
            <person name="Komiyama M."/>
            <person name="Tashiro H."/>
            <person name="Tanigami A."/>
            <person name="Fujiwara T."/>
            <person name="Ono T."/>
            <person name="Yamada K."/>
            <person name="Fujii Y."/>
            <person name="Ozaki K."/>
            <person name="Hirao M."/>
            <person name="Ohmori Y."/>
            <person name="Kawabata A."/>
            <person name="Hikiji T."/>
            <person name="Kobatake N."/>
            <person name="Inagaki H."/>
            <person name="Ikema Y."/>
            <person name="Okamoto S."/>
            <person name="Okitani R."/>
            <person name="Kawakami T."/>
            <person name="Noguchi S."/>
            <person name="Itoh T."/>
            <person name="Shigeta K."/>
            <person name="Senba T."/>
            <person name="Matsumura K."/>
            <person name="Nakajima Y."/>
            <person name="Mizuno T."/>
            <person name="Morinaga M."/>
            <person name="Sasaki M."/>
            <person name="Togashi T."/>
            <person name="Oyama M."/>
            <person name="Hata H."/>
            <person name="Watanabe M."/>
            <person name="Komatsu T."/>
            <person name="Mizushima-Sugano J."/>
            <person name="Satoh T."/>
            <person name="Shirai Y."/>
            <person name="Takahashi Y."/>
            <person name="Nakagawa K."/>
            <person name="Okumura K."/>
            <person name="Nagase T."/>
            <person name="Nomura N."/>
            <person name="Kikuchi H."/>
            <person name="Masuho Y."/>
            <person name="Yamashita R."/>
            <person name="Nakai K."/>
            <person name="Yada T."/>
            <person name="Nakamura Y."/>
            <person name="Ohara O."/>
            <person name="Isogai T."/>
            <person name="Sugano S."/>
        </authorList>
    </citation>
    <scope>NUCLEOTIDE SEQUENCE [LARGE SCALE MRNA]</scope>
</reference>
<reference key="5">
    <citation type="submission" date="2005-07" db="EMBL/GenBank/DDBJ databases">
        <authorList>
            <person name="Mural R.J."/>
            <person name="Istrail S."/>
            <person name="Sutton G.G."/>
            <person name="Florea L."/>
            <person name="Halpern A.L."/>
            <person name="Mobarry C.M."/>
            <person name="Lippert R."/>
            <person name="Walenz B."/>
            <person name="Shatkay H."/>
            <person name="Dew I."/>
            <person name="Miller J.R."/>
            <person name="Flanigan M.J."/>
            <person name="Edwards N.J."/>
            <person name="Bolanos R."/>
            <person name="Fasulo D."/>
            <person name="Halldorsson B.V."/>
            <person name="Hannenhalli S."/>
            <person name="Turner R."/>
            <person name="Yooseph S."/>
            <person name="Lu F."/>
            <person name="Nusskern D.R."/>
            <person name="Shue B.C."/>
            <person name="Zheng X.H."/>
            <person name="Zhong F."/>
            <person name="Delcher A.L."/>
            <person name="Huson D.H."/>
            <person name="Kravitz S.A."/>
            <person name="Mouchard L."/>
            <person name="Reinert K."/>
            <person name="Remington K.A."/>
            <person name="Clark A.G."/>
            <person name="Waterman M.S."/>
            <person name="Eichler E.E."/>
            <person name="Adams M.D."/>
            <person name="Hunkapiller M.W."/>
            <person name="Myers E.W."/>
            <person name="Venter J.C."/>
        </authorList>
    </citation>
    <scope>NUCLEOTIDE SEQUENCE [LARGE SCALE GENOMIC DNA]</scope>
</reference>
<reference key="6">
    <citation type="journal article" date="2004" name="Genome Res.">
        <title>The status, quality, and expansion of the NIH full-length cDNA project: the Mammalian Gene Collection (MGC).</title>
        <authorList>
            <consortium name="The MGC Project Team"/>
        </authorList>
    </citation>
    <scope>NUCLEOTIDE SEQUENCE [LARGE SCALE MRNA]</scope>
    <source>
        <tissue>Placenta</tissue>
    </source>
</reference>
<reference key="7">
    <citation type="journal article" date="2009" name="Proc. Natl. Acad. Sci. U.S.A.">
        <title>Global profiling of protease cleavage sites by chemoselective labeling of protein N-termini.</title>
        <authorList>
            <person name="Xu G."/>
            <person name="Shin S.B."/>
            <person name="Jaffrey S.R."/>
        </authorList>
    </citation>
    <scope>PROTEIN SEQUENCE [LARGE SCALE ANALYSIS] OF 48-63</scope>
    <source>
        <tissue>Leukemic T-cell</tissue>
    </source>
</reference>
<reference key="8">
    <citation type="submission" date="2008-12" db="UniProtKB">
        <authorList>
            <person name="Lubec G."/>
            <person name="Vishwanath V."/>
            <person name="Chen W.-Q."/>
            <person name="Sun Y."/>
        </authorList>
    </citation>
    <scope>PROTEIN SEQUENCE OF 95-121; 125-155; 189-198; 202-239; 242-259; 265-279; 282-345; 388-422; 433-456 AND 490-519</scope>
    <scope>IDENTIFICATION BY MASS SPECTROMETRY</scope>
    <source>
        <tissue>Brain</tissue>
        <tissue>Cajal-Retzius cell</tissue>
        <tissue>Fetal brain cortex</tissue>
    </source>
</reference>
<reference key="9">
    <citation type="journal article" date="1987" name="Curr. Genet.">
        <title>Sequence analysis of cDNAs for the human and bovine ATP synthase beta subunit: mitochondrial DNA genes sustain seventeen times more mutations.</title>
        <authorList>
            <person name="Wallace D.C."/>
            <person name="Ye J."/>
            <person name="Neckelmann S.N."/>
            <person name="Singh G."/>
            <person name="Webster K.A."/>
            <person name="Greenberg B.D."/>
        </authorList>
    </citation>
    <scope>NUCLEOTIDE SEQUENCE [MRNA] OF 218-529</scope>
</reference>
<reference key="10">
    <citation type="journal article" date="2004" name="Biochem. J.">
        <title>Vectorial proteomics reveal targeting, phosphorylation and specific fragmentation of polymerase I and transcript release factor (PTRF) at the surface of caveolae in human adipocytes.</title>
        <authorList>
            <person name="Aboulaich N."/>
            <person name="Vainonen J.P."/>
            <person name="Stralfors P."/>
            <person name="Vener A.V."/>
        </authorList>
    </citation>
    <scope>PROTEIN SEQUENCE OF 95-109; 282-294 AND 311-324</scope>
    <source>
        <tissue>Adipocyte</tissue>
    </source>
</reference>
<reference key="11">
    <citation type="submission" date="2005-03" db="UniProtKB">
        <authorList>
            <person name="Bienvenut W.V."/>
        </authorList>
    </citation>
    <scope>PROTEIN SEQUENCE OF 95-121; 125-155; 162-188; 202-239; 242-259; 265-279; 282-345; 407-422 AND 463-480</scope>
    <scope>IDENTIFICATION BY MASS SPECTROMETRY</scope>
    <source>
        <tissue>B-cell lymphoma</tissue>
    </source>
</reference>
<reference key="12">
    <citation type="journal article" date="2003" name="Nature">
        <title>Proteomic characterization of the human centrosome by protein correlation profiling.</title>
        <authorList>
            <person name="Andersen J.S."/>
            <person name="Wilkinson C.J."/>
            <person name="Mayor T."/>
            <person name="Mortensen P."/>
            <person name="Nigg E.A."/>
            <person name="Mann M."/>
        </authorList>
    </citation>
    <scope>IDENTIFICATION BY MASS SPECTROMETRY</scope>
    <source>
        <tissue>Lymphoblast</tissue>
    </source>
</reference>
<reference key="13">
    <citation type="journal article" date="2009" name="Science">
        <title>Lysine acetylation targets protein complexes and co-regulates major cellular functions.</title>
        <authorList>
            <person name="Choudhary C."/>
            <person name="Kumar C."/>
            <person name="Gnad F."/>
            <person name="Nielsen M.L."/>
            <person name="Rehman M."/>
            <person name="Walther T.C."/>
            <person name="Olsen J.V."/>
            <person name="Mann M."/>
        </authorList>
    </citation>
    <scope>ACETYLATION [LARGE SCALE ANALYSIS] AT LYS-133; LYS-198 AND LYS-426</scope>
    <scope>IDENTIFICATION BY MASS SPECTROMETRY [LARGE SCALE ANALYSIS]</scope>
</reference>
<reference key="14">
    <citation type="journal article" date="2011" name="BMC Syst. Biol.">
        <title>Initial characterization of the human central proteome.</title>
        <authorList>
            <person name="Burkard T.R."/>
            <person name="Planyavsky M."/>
            <person name="Kaupe I."/>
            <person name="Breitwieser F.P."/>
            <person name="Buerckstuemmer T."/>
            <person name="Bennett K.L."/>
            <person name="Superti-Furga G."/>
            <person name="Colinge J."/>
        </authorList>
    </citation>
    <scope>IDENTIFICATION BY MASS SPECTROMETRY [LARGE SCALE ANALYSIS]</scope>
</reference>
<reference key="15">
    <citation type="journal article" date="2013" name="J. Proteome Res.">
        <title>Toward a comprehensive characterization of a human cancer cell phosphoproteome.</title>
        <authorList>
            <person name="Zhou H."/>
            <person name="Di Palma S."/>
            <person name="Preisinger C."/>
            <person name="Peng M."/>
            <person name="Polat A.N."/>
            <person name="Heck A.J."/>
            <person name="Mohammed S."/>
        </authorList>
    </citation>
    <scope>PHOSPHORYLATION [LARGE SCALE ANALYSIS] AT SER-415</scope>
    <scope>IDENTIFICATION BY MASS SPECTROMETRY [LARGE SCALE ANALYSIS]</scope>
    <source>
        <tissue>Erythroleukemia</tissue>
    </source>
</reference>
<reference key="16">
    <citation type="journal article" date="2014" name="J. Proteomics">
        <title>An enzyme assisted RP-RPLC approach for in-depth analysis of human liver phosphoproteome.</title>
        <authorList>
            <person name="Bian Y."/>
            <person name="Song C."/>
            <person name="Cheng K."/>
            <person name="Dong M."/>
            <person name="Wang F."/>
            <person name="Huang J."/>
            <person name="Sun D."/>
            <person name="Wang L."/>
            <person name="Ye M."/>
            <person name="Zou H."/>
        </authorList>
    </citation>
    <scope>PHOSPHORYLATION [LARGE SCALE ANALYSIS] AT SER-415 AND SER-529</scope>
    <scope>IDENTIFICATION BY MASS SPECTROMETRY [LARGE SCALE ANALYSIS]</scope>
    <source>
        <tissue>Liver</tissue>
    </source>
</reference>
<reference key="17">
    <citation type="journal article" date="2015" name="Cell Death Differ.">
        <title>Cofactor Strap regulates oxidative phosphorylation and mitochondrial p53 activity through ATP synthase.</title>
        <authorList>
            <person name="Maniam S."/>
            <person name="Coutts A.S."/>
            <person name="Stratford M.R."/>
            <person name="McGouran J."/>
            <person name="Kessler B."/>
            <person name="La Thangue N.B."/>
        </authorList>
    </citation>
    <scope>SUBCELLULAR LOCATION</scope>
    <scope>INTERACTION WITH TTC5</scope>
    <scope>FUNCTION</scope>
    <scope>CATALYTIC ACTIVITY</scope>
</reference>
<reference key="18">
    <citation type="journal article" date="2015" name="Proteomics">
        <title>N-terminome analysis of the human mitochondrial proteome.</title>
        <authorList>
            <person name="Vaca Jacome A.S."/>
            <person name="Rabilloud T."/>
            <person name="Schaeffer-Reiss C."/>
            <person name="Rompais M."/>
            <person name="Ayoub D."/>
            <person name="Lane L."/>
            <person name="Bairoch A."/>
            <person name="Van Dorsselaer A."/>
            <person name="Carapito C."/>
        </authorList>
    </citation>
    <scope>IDENTIFICATION BY MASS SPECTROMETRY [LARGE SCALE ANALYSIS]</scope>
</reference>
<reference key="19">
    <citation type="journal article" date="2020" name="Stem Cell Reports">
        <title>Mitoregulin Controls beta-Oxidation in Human and Mouse Adipocytes.</title>
        <authorList>
            <person name="Friesen M."/>
            <person name="Warren C.R."/>
            <person name="Yu H."/>
            <person name="Toyohara T."/>
            <person name="Ding Q."/>
            <person name="Florido M.H.C."/>
            <person name="Sayre C."/>
            <person name="Pope B.D."/>
            <person name="Goff L.A."/>
            <person name="Rinn J.L."/>
            <person name="Cowan C.A."/>
        </authorList>
    </citation>
    <scope>INTERACTION WITH MTLN</scope>
</reference>
<reference evidence="19 20 21 22 23 24 25 26" key="20">
    <citation type="journal article" date="2023" name="Mol. Cell">
        <title>Structure of the human ATP synthase.</title>
        <authorList>
            <person name="Lai Y."/>
            <person name="Zhang Y."/>
            <person name="Zhou S."/>
            <person name="Xu J."/>
            <person name="Du Z."/>
            <person name="Feng Z."/>
            <person name="Yu L."/>
            <person name="Zhao Z."/>
            <person name="Wang W."/>
            <person name="Tang Y."/>
            <person name="Yang X."/>
            <person name="Guddat L.W."/>
            <person name="Liu F."/>
            <person name="Gao Y."/>
            <person name="Rao Z."/>
            <person name="Gong H."/>
        </authorList>
    </citation>
    <scope>STRUCTURE BY ELECTRON MICROSCOPY (2.53 ANGSTROMS) OF 48-529 IN COMPLEX WITH ADP AND MG(2+)</scope>
    <scope>IDENTIFICATION IN THE ATP SYNTHASE COMPLEX</scope>
    <scope>FUNCTION</scope>
    <scope>CATALYTIC ACTIVITY</scope>
    <scope>COFACTOR</scope>
    <scope>SUBUNIT</scope>
</reference>
<reference key="21">
    <citation type="journal article" date="2022" name="N. Engl. J. Med.">
        <title>Congenital hypermetabolism and uncoupled oxidative phosphorylation.</title>
        <authorList>
            <person name="Ganetzky R.D."/>
            <person name="Markhard A.L."/>
            <person name="Yee I."/>
            <person name="Clever S."/>
            <person name="Cahill A."/>
            <person name="Shah H."/>
            <person name="Grabarek Z."/>
            <person name="To T.L."/>
            <person name="Mootha V.K."/>
        </authorList>
    </citation>
    <scope>INVOLVEMENT IN HUMOP2</scope>
    <scope>VARIANT HUMOP2 PRO-335</scope>
    <scope>FUNCTION</scope>
    <scope>CHARACTERIZATION OF VARIANT HUMOP2 PRO-335</scope>
</reference>
<reference key="22">
    <citation type="journal article" date="2015" name="Proc. Natl. Acad. Sci. U.S.A.">
        <title>Neomorphic effects of recurrent somatic mutations in Yin Yang 1 in insulin-producing adenomas.</title>
        <authorList>
            <person name="Cromer M.K."/>
            <person name="Choi M."/>
            <person name="Nelson-Williams C."/>
            <person name="Fonseca A.L."/>
            <person name="Kunstman J.W."/>
            <person name="Korah R.M."/>
            <person name="Overton J.D."/>
            <person name="Mane S."/>
            <person name="Kenney B."/>
            <person name="Malchoff C.D."/>
            <person name="Stalberg P."/>
            <person name="Akerstroem G."/>
            <person name="Westin G."/>
            <person name="Hellman P."/>
            <person name="Carling T."/>
            <person name="Bjoerklund P."/>
            <person name="Lifton R.P."/>
        </authorList>
    </citation>
    <scope>VARIANT VAL-130</scope>
</reference>
<comment type="function">
    <text evidence="4 13 15 16 17">Catalytic subunit beta, of the mitochondrial membrane ATP synthase complex (F(1)F(0) ATP synthase or Complex V) that produces ATP from ADP in the presence of a proton gradient across the membrane which is generated by electron transport complexes of the respiratory chain (Probable) (PubMed:37244256). ATP synthase complex consist of a soluble F(1) head domain - the catalytic core - and a membrane F(1) domain - the membrane proton channel (PubMed:37244256). These two domains are linked by a central stalk rotating inside the F(1) region and a stationary peripheral stalk (PubMed:37244256). During catalysis, ATP synthesis in the catalytic domain of F(1) is coupled via a rotary mechanism of the central stalk subunits to proton translocation (Probable). In vivo, can only synthesize ATP although its ATP hydrolase activity can be activated artificially in vitro (By similarity). With the subunit alpha (ATP5F1A), forms the catalytic core in the F(1) domain (PubMed:37244256).</text>
</comment>
<comment type="catalytic activity">
    <reaction evidence="15 17">
        <text>ATP + H2O + 4 H(+)(in) = ADP + phosphate + 5 H(+)(out)</text>
        <dbReference type="Rhea" id="RHEA:57720"/>
        <dbReference type="ChEBI" id="CHEBI:15377"/>
        <dbReference type="ChEBI" id="CHEBI:15378"/>
        <dbReference type="ChEBI" id="CHEBI:30616"/>
        <dbReference type="ChEBI" id="CHEBI:43474"/>
        <dbReference type="ChEBI" id="CHEBI:456216"/>
        <dbReference type="EC" id="7.1.2.2"/>
    </reaction>
    <physiologicalReaction direction="right-to-left" evidence="15 17">
        <dbReference type="Rhea" id="RHEA:57722"/>
    </physiologicalReaction>
</comment>
<comment type="cofactor">
    <cofactor evidence="17">
        <name>Mg(2+)</name>
        <dbReference type="ChEBI" id="CHEBI:18420"/>
    </cofactor>
</comment>
<comment type="subunit">
    <text evidence="3 5 7 11 13">Homotrimer (PubMed:37244256). Component of the ATP synthase complex composed at least of ATP5F1A/subunit alpha, ATP5F1B/subunit beta, ATP5MC1/subunit c (homooctomer), MT-ATP6/subunit a, MT-ATP8/subunit 8, ATP5ME/subunit e, ATP5MF/subunit f, ATP5MG/subunit g, ATP5MK/subunit k, ATP5MJ/subunit j, ATP5F1C/subunit gamma, ATP5F1D/subunit delta, ATP5F1E/subunit epsilon, ATP5PF/subunit F6, ATP5PB/subunit b, ATP5PD/subunit d, ATP5PO/subunit OSCP (PubMed:37244256). ATP synthase complex consists of a soluble F(1) head domain (subunits alpha(3) and beta(3)) - the catalytic core - and a membrane F(0) domain - the membrane proton channel (subunits c, a, 8, e, f, g, k and j) (PubMed:37244256). These two domains are linked by a central stalk (subunits gamma, delta, and epsilon) rotating inside the F1 region and a stationary peripheral stalk (subunits F6, b, d, and OSCP) (PubMed:37244256). Interacts with PPIF (By similarity). Interacts with BCL2L1 isoform BCL-X(L); the interaction mediates the association of BCL2L1 isoform BCL-X(L) with the mitochondrial membrane F(1)F(0) ATP synthase and enhances neurons metabolic efficiency (By similarity). Interacts with CLN5 and PPT1 (By similarity). Interacts with S100A1; this interaction increases F1-ATPase activity (By similarity). Interacts with MTLN (PubMed:32243843). Interacts with TTC5/STRAP; the interaction results in decreased mitochondrial ATP production (PubMed:25168243).</text>
</comment>
<comment type="interaction">
    <interactant intactId="EBI-356231">
        <id>P06576</id>
    </interactant>
    <interactant intactId="EBI-351437">
        <id>P25705</id>
        <label>ATP5F1A</label>
    </interactant>
    <organismsDiffer>false</organismsDiffer>
    <experiments>7</experiments>
</comment>
<comment type="interaction">
    <interactant intactId="EBI-356231">
        <id>P06576</id>
    </interactant>
    <interactant intactId="EBI-711768">
        <id>P36542</id>
        <label>ATP5F1C</label>
    </interactant>
    <organismsDiffer>false</organismsDiffer>
    <experiments>2</experiments>
</comment>
<comment type="interaction">
    <interactant intactId="EBI-356231">
        <id>P06576</id>
    </interactant>
    <interactant intactId="EBI-718459">
        <id>Q9UII2</id>
        <label>ATP5IF1</label>
    </interactant>
    <organismsDiffer>false</organismsDiffer>
    <experiments>4</experiments>
</comment>
<comment type="interaction">
    <interactant intactId="EBI-356231">
        <id>P06576</id>
    </interactant>
    <interactant intactId="EBI-724024">
        <id>O75947</id>
        <label>ATP5PD</label>
    </interactant>
    <organismsDiffer>false</organismsDiffer>
    <experiments>2</experiments>
</comment>
<comment type="interaction">
    <interactant intactId="EBI-356231">
        <id>P06576</id>
    </interactant>
    <interactant intactId="EBI-1166891">
        <id>Q5TC12</id>
        <label>ATPAF1</label>
    </interactant>
    <organismsDiffer>false</organismsDiffer>
    <experiments>3</experiments>
</comment>
<comment type="interaction">
    <interactant intactId="EBI-356231">
        <id>P06576</id>
    </interactant>
    <interactant intactId="EBI-1166928">
        <id>Q8N5M1</id>
        <label>ATPAF2</label>
    </interactant>
    <organismsDiffer>false</organismsDiffer>
    <experiments>8</experiments>
</comment>
<comment type="interaction">
    <interactant intactId="EBI-356231">
        <id>P06576</id>
    </interactant>
    <interactant intactId="EBI-930964">
        <id>P54253</id>
        <label>ATXN1</label>
    </interactant>
    <organismsDiffer>false</organismsDiffer>
    <experiments>3</experiments>
</comment>
<comment type="interaction">
    <interactant intactId="EBI-356231">
        <id>P06576</id>
    </interactant>
    <interactant intactId="EBI-358049">
        <id>Q13895</id>
        <label>BYSL</label>
    </interactant>
    <organismsDiffer>false</organismsDiffer>
    <experiments>3</experiments>
</comment>
<comment type="interaction">
    <interactant intactId="EBI-356231">
        <id>P06576</id>
    </interactant>
    <interactant intactId="EBI-1043151">
        <id>P28566</id>
        <label>HTR1E</label>
    </interactant>
    <organismsDiffer>false</organismsDiffer>
    <experiments>2</experiments>
</comment>
<comment type="interaction">
    <interactant intactId="EBI-356231">
        <id>P06576</id>
    </interactant>
    <interactant intactId="EBI-2340947">
        <id>Q8N448</id>
        <label>LNX2</label>
    </interactant>
    <organismsDiffer>false</organismsDiffer>
    <experiments>4</experiments>
</comment>
<comment type="interaction">
    <interactant intactId="EBI-356231">
        <id>P06576</id>
    </interactant>
    <interactant intactId="EBI-13365456">
        <id>Q5T1Q4</id>
        <label>SLC35F1</label>
    </interactant>
    <organismsDiffer>false</organismsDiffer>
    <experiments>2</experiments>
</comment>
<comment type="interaction">
    <interactant intactId="EBI-356231">
        <id>P06576</id>
    </interactant>
    <interactant intactId="EBI-347088">
        <id>P63104</id>
        <label>YWHAZ</label>
    </interactant>
    <organismsDiffer>false</organismsDiffer>
    <experiments>2</experiments>
</comment>
<comment type="subcellular location">
    <subcellularLocation>
        <location evidence="7">Mitochondrion inner membrane</location>
        <topology evidence="2">Peripheral membrane protein</topology>
        <orientation evidence="2 7">Matrix side</orientation>
    </subcellularLocation>
</comment>
<comment type="disease" evidence="12">
    <disease id="DI-06541">
        <name>Hypermetabolism due to uncoupled mitochondrial oxidative phosphorylation 2</name>
        <acronym>HUMOP2</acronym>
        <description>A disorder apparent in infancy and characterized by euthyroid hypermetabolism, failure to thrive despite excessive caloric intake, intermittent hyperthermia, and developmental delay.</description>
        <dbReference type="MIM" id="620085"/>
    </disease>
    <text>The disease is caused by variants affecting the gene represented in this entry.</text>
</comment>
<comment type="similarity">
    <text evidence="14">Belongs to the ATPase alpha/beta chains family.</text>
</comment>
<name>ATPB_HUMAN</name>
<dbReference type="EC" id="7.1.2.2" evidence="15"/>
<dbReference type="EMBL" id="M27132">
    <property type="protein sequence ID" value="AAA51809.1"/>
    <property type="molecule type" value="Genomic_DNA"/>
</dbReference>
<dbReference type="EMBL" id="M19483">
    <property type="protein sequence ID" value="AAA51808.1"/>
    <property type="molecule type" value="Genomic_DNA"/>
</dbReference>
<dbReference type="EMBL" id="M19482">
    <property type="protein sequence ID" value="AAA51808.1"/>
    <property type="status" value="JOINED"/>
    <property type="molecule type" value="Genomic_DNA"/>
</dbReference>
<dbReference type="EMBL" id="X03559">
    <property type="protein sequence ID" value="CAA27246.1"/>
    <property type="molecule type" value="mRNA"/>
</dbReference>
<dbReference type="EMBL" id="D00022">
    <property type="protein sequence ID" value="BAA00016.1"/>
    <property type="molecule type" value="mRNA"/>
</dbReference>
<dbReference type="EMBL" id="AK291085">
    <property type="protein sequence ID" value="BAF83774.1"/>
    <property type="molecule type" value="mRNA"/>
</dbReference>
<dbReference type="EMBL" id="CH471054">
    <property type="protein sequence ID" value="EAW96952.1"/>
    <property type="molecule type" value="Genomic_DNA"/>
</dbReference>
<dbReference type="EMBL" id="BC016512">
    <property type="protein sequence ID" value="AAH16512.1"/>
    <property type="molecule type" value="mRNA"/>
</dbReference>
<dbReference type="EMBL" id="X05606">
    <property type="protein sequence ID" value="CAA29095.1"/>
    <property type="molecule type" value="mRNA"/>
</dbReference>
<dbReference type="CCDS" id="CCDS8924.1"/>
<dbReference type="PIR" id="A33370">
    <property type="entry name" value="A33370"/>
</dbReference>
<dbReference type="RefSeq" id="NP_001677.2">
    <property type="nucleotide sequence ID" value="NM_001686.3"/>
</dbReference>
<dbReference type="PDB" id="8H9E">
    <property type="method" value="EM"/>
    <property type="resolution" value="2.53 A"/>
    <property type="chains" value="D/E/F=48-529"/>
</dbReference>
<dbReference type="PDB" id="8H9I">
    <property type="method" value="EM"/>
    <property type="resolution" value="2.77 A"/>
    <property type="chains" value="D/E/F=48-529"/>
</dbReference>
<dbReference type="PDB" id="8H9L">
    <property type="method" value="EM"/>
    <property type="resolution" value="2.61 A"/>
    <property type="chains" value="D/E/F=48-529"/>
</dbReference>
<dbReference type="PDB" id="8H9P">
    <property type="method" value="EM"/>
    <property type="resolution" value="3.02 A"/>
    <property type="chains" value="D/E/F=48-529"/>
</dbReference>
<dbReference type="PDB" id="8H9S">
    <property type="method" value="EM"/>
    <property type="resolution" value="2.53 A"/>
    <property type="chains" value="D/E/F=48-529"/>
</dbReference>
<dbReference type="PDB" id="8H9T">
    <property type="method" value="EM"/>
    <property type="resolution" value="2.77 A"/>
    <property type="chains" value="D/E/F=48-529"/>
</dbReference>
<dbReference type="PDB" id="8H9U">
    <property type="method" value="EM"/>
    <property type="resolution" value="2.61 A"/>
    <property type="chains" value="D/E/F=48-529"/>
</dbReference>
<dbReference type="PDB" id="8H9V">
    <property type="method" value="EM"/>
    <property type="resolution" value="3.02 A"/>
    <property type="chains" value="D/E/F=48-529"/>
</dbReference>
<dbReference type="PDB" id="8KI3">
    <property type="method" value="EM"/>
    <property type="resolution" value="2.89 A"/>
    <property type="chains" value="D/E/F=48-529"/>
</dbReference>
<dbReference type="PDBsum" id="8H9E"/>
<dbReference type="PDBsum" id="8H9I"/>
<dbReference type="PDBsum" id="8H9L"/>
<dbReference type="PDBsum" id="8H9P"/>
<dbReference type="PDBsum" id="8H9S"/>
<dbReference type="PDBsum" id="8H9T"/>
<dbReference type="PDBsum" id="8H9U"/>
<dbReference type="PDBsum" id="8H9V"/>
<dbReference type="PDBsum" id="8KI3"/>
<dbReference type="EMDB" id="EMD-34564"/>
<dbReference type="EMDB" id="EMD-34568"/>
<dbReference type="EMDB" id="EMD-34572"/>
<dbReference type="EMDB" id="EMD-34576"/>
<dbReference type="EMDB" id="EMD-34580"/>
<dbReference type="EMDB" id="EMD-34581"/>
<dbReference type="EMDB" id="EMD-34582"/>
<dbReference type="EMDB" id="EMD-34583"/>
<dbReference type="EMDB" id="EMD-37251"/>
<dbReference type="SMR" id="P06576"/>
<dbReference type="BioGRID" id="106994">
    <property type="interactions" value="652"/>
</dbReference>
<dbReference type="ComplexPortal" id="CPX-6151">
    <property type="entry name" value="Mitochondrial proton-transporting ATP synthase complex"/>
</dbReference>
<dbReference type="CORUM" id="P06576"/>
<dbReference type="FunCoup" id="P06576">
    <property type="interactions" value="2188"/>
</dbReference>
<dbReference type="IntAct" id="P06576">
    <property type="interactions" value="242"/>
</dbReference>
<dbReference type="MINT" id="P06576"/>
<dbReference type="STRING" id="9606.ENSP00000262030"/>
<dbReference type="ChEMBL" id="CHEMBL2062350"/>
<dbReference type="DrugBank" id="DB07384">
    <property type="generic name" value="1-ACETYL-2-CARBOXYPIPERIDINE"/>
</dbReference>
<dbReference type="DrugBank" id="DB07394">
    <property type="generic name" value="AUROVERTIN B"/>
</dbReference>
<dbReference type="DrugBank" id="DB01119">
    <property type="generic name" value="Diazoxide"/>
</dbReference>
<dbReference type="DrugBank" id="DB08949">
    <property type="generic name" value="Inositol nicotinate"/>
</dbReference>
<dbReference type="DrugBank" id="DB08629">
    <property type="generic name" value="N1-(2-AMINO-4-METHYLPENTYL)OCTAHYDRO-PYRROLO[1,2-A] PYRIMIDINE"/>
</dbReference>
<dbReference type="DrugBank" id="DB12695">
    <property type="generic name" value="Phenethyl Isothiocyanate"/>
</dbReference>
<dbReference type="DrugBank" id="DB08399">
    <property type="generic name" value="Piceatannol"/>
</dbReference>
<dbReference type="DrugBank" id="DB04216">
    <property type="generic name" value="Quercetin"/>
</dbReference>
<dbReference type="TCDB" id="3.A.2.1.15">
    <property type="family name" value="the h+- or na+-translocating f-type, v-type and a-type atpase (f-atpase) superfamily"/>
</dbReference>
<dbReference type="CarbonylDB" id="P06576"/>
<dbReference type="GlyCosmos" id="P06576">
    <property type="glycosylation" value="2 sites, 1 glycan"/>
</dbReference>
<dbReference type="GlyGen" id="P06576">
    <property type="glycosylation" value="2 sites, 1 O-linked glycan (1 site)"/>
</dbReference>
<dbReference type="iPTMnet" id="P06576"/>
<dbReference type="MetOSite" id="P06576"/>
<dbReference type="PhosphoSitePlus" id="P06576"/>
<dbReference type="SwissPalm" id="P06576"/>
<dbReference type="BioMuta" id="ATP5B"/>
<dbReference type="DMDM" id="114549"/>
<dbReference type="OGP" id="P06576"/>
<dbReference type="REPRODUCTION-2DPAGE" id="IPI00303476"/>
<dbReference type="REPRODUCTION-2DPAGE" id="P06576"/>
<dbReference type="CPTAC" id="CPTAC-315"/>
<dbReference type="CPTAC" id="CPTAC-316"/>
<dbReference type="jPOST" id="P06576"/>
<dbReference type="MassIVE" id="P06576"/>
<dbReference type="PaxDb" id="9606-ENSP00000262030"/>
<dbReference type="PeptideAtlas" id="P06576"/>
<dbReference type="PRIDE" id="P06576"/>
<dbReference type="ProteomicsDB" id="51907"/>
<dbReference type="Pumba" id="P06576"/>
<dbReference type="TopDownProteomics" id="P06576"/>
<dbReference type="Antibodypedia" id="877">
    <property type="antibodies" value="565 antibodies from 36 providers"/>
</dbReference>
<dbReference type="DNASU" id="506"/>
<dbReference type="Ensembl" id="ENST00000262030.8">
    <property type="protein sequence ID" value="ENSP00000262030.3"/>
    <property type="gene ID" value="ENSG00000110955.9"/>
</dbReference>
<dbReference type="GeneID" id="506"/>
<dbReference type="KEGG" id="hsa:506"/>
<dbReference type="MANE-Select" id="ENST00000262030.8">
    <property type="protein sequence ID" value="ENSP00000262030.3"/>
    <property type="RefSeq nucleotide sequence ID" value="NM_001686.4"/>
    <property type="RefSeq protein sequence ID" value="NP_001677.2"/>
</dbReference>
<dbReference type="AGR" id="HGNC:830"/>
<dbReference type="CTD" id="506"/>
<dbReference type="DisGeNET" id="506"/>
<dbReference type="GeneCards" id="ATP5F1B"/>
<dbReference type="HGNC" id="HGNC:830">
    <property type="gene designation" value="ATP5F1B"/>
</dbReference>
<dbReference type="HPA" id="ENSG00000110955">
    <property type="expression patterns" value="Tissue enhanced (skeletal muscle, tongue)"/>
</dbReference>
<dbReference type="MalaCards" id="ATP5F1B"/>
<dbReference type="MIM" id="102910">
    <property type="type" value="gene"/>
</dbReference>
<dbReference type="MIM" id="620085">
    <property type="type" value="phenotype"/>
</dbReference>
<dbReference type="neXtProt" id="NX_P06576"/>
<dbReference type="OpenTargets" id="ENSG00000110955"/>
<dbReference type="PharmGKB" id="PA25122"/>
<dbReference type="VEuPathDB" id="HostDB:ENSG00000110955"/>
<dbReference type="eggNOG" id="KOG1350">
    <property type="taxonomic scope" value="Eukaryota"/>
</dbReference>
<dbReference type="GeneTree" id="ENSGT00550000074800"/>
<dbReference type="HOGENOM" id="CLU_022398_0_2_1"/>
<dbReference type="InParanoid" id="P06576"/>
<dbReference type="OMA" id="SMEEGGW"/>
<dbReference type="OrthoDB" id="14523at2759"/>
<dbReference type="PAN-GO" id="P06576">
    <property type="GO annotations" value="4 GO annotations based on evolutionary models"/>
</dbReference>
<dbReference type="PhylomeDB" id="P06576"/>
<dbReference type="TreeFam" id="TF105640"/>
<dbReference type="BioCyc" id="MetaCyc:HS03358-MONOMER"/>
<dbReference type="PathwayCommons" id="P06576"/>
<dbReference type="Reactome" id="R-HSA-1268020">
    <property type="pathway name" value="Mitochondrial protein import"/>
</dbReference>
<dbReference type="Reactome" id="R-HSA-163210">
    <property type="pathway name" value="Formation of ATP by chemiosmotic coupling"/>
</dbReference>
<dbReference type="Reactome" id="R-HSA-2151201">
    <property type="pathway name" value="Transcriptional activation of mitochondrial biogenesis"/>
</dbReference>
<dbReference type="Reactome" id="R-HSA-8949613">
    <property type="pathway name" value="Cristae formation"/>
</dbReference>
<dbReference type="Reactome" id="R-HSA-9837999">
    <property type="pathway name" value="Mitochondrial protein degradation"/>
</dbReference>
<dbReference type="SignaLink" id="P06576"/>
<dbReference type="SIGNOR" id="P06576"/>
<dbReference type="BioGRID-ORCS" id="506">
    <property type="hits" value="586 hits in 1170 CRISPR screens"/>
</dbReference>
<dbReference type="CD-CODE" id="91857CE7">
    <property type="entry name" value="Nucleolus"/>
</dbReference>
<dbReference type="CD-CODE" id="FB4E32DD">
    <property type="entry name" value="Presynaptic clusters and postsynaptic densities"/>
</dbReference>
<dbReference type="ChiTaRS" id="ATP5B">
    <property type="organism name" value="human"/>
</dbReference>
<dbReference type="GeneWiki" id="ATP5B"/>
<dbReference type="GenomeRNAi" id="506"/>
<dbReference type="Pharos" id="P06576">
    <property type="development level" value="Tbio"/>
</dbReference>
<dbReference type="PRO" id="PR:P06576"/>
<dbReference type="Proteomes" id="UP000005640">
    <property type="component" value="Chromosome 12"/>
</dbReference>
<dbReference type="RNAct" id="P06576">
    <property type="molecule type" value="protein"/>
</dbReference>
<dbReference type="Bgee" id="ENSG00000110955">
    <property type="expression patterns" value="Expressed in apex of heart and 200 other cell types or tissues"/>
</dbReference>
<dbReference type="ExpressionAtlas" id="P06576">
    <property type="expression patterns" value="baseline and differential"/>
</dbReference>
<dbReference type="GO" id="GO:0009986">
    <property type="term" value="C:cell surface"/>
    <property type="evidence" value="ECO:0000314"/>
    <property type="project" value="UniProtKB"/>
</dbReference>
<dbReference type="GO" id="GO:0070062">
    <property type="term" value="C:extracellular exosome"/>
    <property type="evidence" value="ECO:0007005"/>
    <property type="project" value="UniProtKB"/>
</dbReference>
<dbReference type="GO" id="GO:0016020">
    <property type="term" value="C:membrane"/>
    <property type="evidence" value="ECO:0000314"/>
    <property type="project" value="CAFA"/>
</dbReference>
<dbReference type="GO" id="GO:0005743">
    <property type="term" value="C:mitochondrial inner membrane"/>
    <property type="evidence" value="ECO:0000303"/>
    <property type="project" value="ComplexPortal"/>
</dbReference>
<dbReference type="GO" id="GO:0005759">
    <property type="term" value="C:mitochondrial matrix"/>
    <property type="evidence" value="ECO:0000304"/>
    <property type="project" value="Reactome"/>
</dbReference>
<dbReference type="GO" id="GO:0031966">
    <property type="term" value="C:mitochondrial membrane"/>
    <property type="evidence" value="ECO:0000314"/>
    <property type="project" value="UniProtKB"/>
</dbReference>
<dbReference type="GO" id="GO:0042645">
    <property type="term" value="C:mitochondrial nucleoid"/>
    <property type="evidence" value="ECO:0000314"/>
    <property type="project" value="BHF-UCL"/>
</dbReference>
<dbReference type="GO" id="GO:0005739">
    <property type="term" value="C:mitochondrion"/>
    <property type="evidence" value="ECO:0000314"/>
    <property type="project" value="UniProtKB"/>
</dbReference>
<dbReference type="GO" id="GO:0005634">
    <property type="term" value="C:nucleus"/>
    <property type="evidence" value="ECO:0007005"/>
    <property type="project" value="UniProtKB"/>
</dbReference>
<dbReference type="GO" id="GO:0005886">
    <property type="term" value="C:plasma membrane"/>
    <property type="evidence" value="ECO:0000314"/>
    <property type="project" value="UniProtKB"/>
</dbReference>
<dbReference type="GO" id="GO:0045259">
    <property type="term" value="C:proton-transporting ATP synthase complex"/>
    <property type="evidence" value="ECO:0000314"/>
    <property type="project" value="UniProtKB"/>
</dbReference>
<dbReference type="GO" id="GO:0043532">
    <property type="term" value="F:angiostatin binding"/>
    <property type="evidence" value="ECO:0000353"/>
    <property type="project" value="CAFA"/>
</dbReference>
<dbReference type="GO" id="GO:0005524">
    <property type="term" value="F:ATP binding"/>
    <property type="evidence" value="ECO:0007669"/>
    <property type="project" value="UniProtKB-KW"/>
</dbReference>
<dbReference type="GO" id="GO:0016887">
    <property type="term" value="F:ATP hydrolysis activity"/>
    <property type="evidence" value="ECO:0007669"/>
    <property type="project" value="InterPro"/>
</dbReference>
<dbReference type="GO" id="GO:0042288">
    <property type="term" value="F:MHC class I protein binding"/>
    <property type="evidence" value="ECO:0000314"/>
    <property type="project" value="UniProtKB"/>
</dbReference>
<dbReference type="GO" id="GO:0046933">
    <property type="term" value="F:proton-transporting ATP synthase activity, rotational mechanism"/>
    <property type="evidence" value="ECO:0000314"/>
    <property type="project" value="UniProtKB"/>
</dbReference>
<dbReference type="GO" id="GO:0046961">
    <property type="term" value="F:proton-transporting ATPase activity, rotational mechanism"/>
    <property type="evidence" value="ECO:0000315"/>
    <property type="project" value="UniProtKB"/>
</dbReference>
<dbReference type="GO" id="GO:0001525">
    <property type="term" value="P:angiogenesis"/>
    <property type="evidence" value="ECO:0000315"/>
    <property type="project" value="UniProtKB"/>
</dbReference>
<dbReference type="GO" id="GO:0006754">
    <property type="term" value="P:ATP biosynthetic process"/>
    <property type="evidence" value="ECO:0000315"/>
    <property type="project" value="UniProtKB"/>
</dbReference>
<dbReference type="GO" id="GO:0098761">
    <property type="term" value="P:cellular response to interleukin-7"/>
    <property type="evidence" value="ECO:0007669"/>
    <property type="project" value="Ensembl"/>
</dbReference>
<dbReference type="GO" id="GO:0006091">
    <property type="term" value="P:generation of precursor metabolites and energy"/>
    <property type="evidence" value="ECO:0000303"/>
    <property type="project" value="UniProtKB"/>
</dbReference>
<dbReference type="GO" id="GO:0006629">
    <property type="term" value="P:lipid metabolic process"/>
    <property type="evidence" value="ECO:0007669"/>
    <property type="project" value="Ensembl"/>
</dbReference>
<dbReference type="GO" id="GO:0006933">
    <property type="term" value="P:negative regulation of cell adhesion involved in substrate-bound cell migration"/>
    <property type="evidence" value="ECO:0007669"/>
    <property type="project" value="Ensembl"/>
</dbReference>
<dbReference type="GO" id="GO:0001649">
    <property type="term" value="P:osteoblast differentiation"/>
    <property type="evidence" value="ECO:0007005"/>
    <property type="project" value="UniProtKB"/>
</dbReference>
<dbReference type="GO" id="GO:0043536">
    <property type="term" value="P:positive regulation of blood vessel endothelial cell migration"/>
    <property type="evidence" value="ECO:0000316"/>
    <property type="project" value="CAFA"/>
</dbReference>
<dbReference type="GO" id="GO:0015986">
    <property type="term" value="P:proton motive force-driven ATP synthesis"/>
    <property type="evidence" value="ECO:0000314"/>
    <property type="project" value="UniProtKB"/>
</dbReference>
<dbReference type="GO" id="GO:0042776">
    <property type="term" value="P:proton motive force-driven mitochondrial ATP synthesis"/>
    <property type="evidence" value="ECO:0000314"/>
    <property type="project" value="UniProtKB"/>
</dbReference>
<dbReference type="GO" id="GO:1902600">
    <property type="term" value="P:proton transmembrane transport"/>
    <property type="evidence" value="ECO:0000315"/>
    <property type="project" value="UniProtKB"/>
</dbReference>
<dbReference type="GO" id="GO:0051453">
    <property type="term" value="P:regulation of intracellular pH"/>
    <property type="evidence" value="ECO:0000315"/>
    <property type="project" value="UniProtKB"/>
</dbReference>
<dbReference type="CDD" id="cd18110">
    <property type="entry name" value="ATP-synt_F1_beta_C"/>
    <property type="match status" value="1"/>
</dbReference>
<dbReference type="CDD" id="cd18115">
    <property type="entry name" value="ATP-synt_F1_beta_N"/>
    <property type="match status" value="1"/>
</dbReference>
<dbReference type="CDD" id="cd01133">
    <property type="entry name" value="F1-ATPase_beta_CD"/>
    <property type="match status" value="1"/>
</dbReference>
<dbReference type="FunFam" id="1.10.1140.10:FF:000001">
    <property type="entry name" value="ATP synthase subunit beta"/>
    <property type="match status" value="1"/>
</dbReference>
<dbReference type="FunFam" id="2.40.10.170:FF:000004">
    <property type="entry name" value="ATP synthase subunit beta"/>
    <property type="match status" value="1"/>
</dbReference>
<dbReference type="FunFam" id="3.40.50.300:FF:000026">
    <property type="entry name" value="ATP synthase subunit beta"/>
    <property type="match status" value="1"/>
</dbReference>
<dbReference type="Gene3D" id="2.40.10.170">
    <property type="match status" value="1"/>
</dbReference>
<dbReference type="Gene3D" id="1.10.1140.10">
    <property type="entry name" value="Bovine Mitochondrial F1-atpase, Atp Synthase Beta Chain, Chain D, domain 3"/>
    <property type="match status" value="1"/>
</dbReference>
<dbReference type="Gene3D" id="3.40.50.300">
    <property type="entry name" value="P-loop containing nucleotide triphosphate hydrolases"/>
    <property type="match status" value="1"/>
</dbReference>
<dbReference type="HAMAP" id="MF_01347">
    <property type="entry name" value="ATP_synth_beta_bact"/>
    <property type="match status" value="1"/>
</dbReference>
<dbReference type="InterPro" id="IPR003593">
    <property type="entry name" value="AAA+_ATPase"/>
</dbReference>
<dbReference type="InterPro" id="IPR055190">
    <property type="entry name" value="ATP-synt_VA_C"/>
</dbReference>
<dbReference type="InterPro" id="IPR005722">
    <property type="entry name" value="ATP_synth_F1_bsu"/>
</dbReference>
<dbReference type="InterPro" id="IPR020003">
    <property type="entry name" value="ATPase_a/bsu_AS"/>
</dbReference>
<dbReference type="InterPro" id="IPR050053">
    <property type="entry name" value="ATPase_alpha/beta_chains"/>
</dbReference>
<dbReference type="InterPro" id="IPR004100">
    <property type="entry name" value="ATPase_F1/V1/A1_a/bsu_N"/>
</dbReference>
<dbReference type="InterPro" id="IPR036121">
    <property type="entry name" value="ATPase_F1/V1/A1_a/bsu_N_sf"/>
</dbReference>
<dbReference type="InterPro" id="IPR000194">
    <property type="entry name" value="ATPase_F1/V1/A1_a/bsu_nucl-bd"/>
</dbReference>
<dbReference type="InterPro" id="IPR024034">
    <property type="entry name" value="ATPase_F1/V1_b/a_C"/>
</dbReference>
<dbReference type="InterPro" id="IPR027417">
    <property type="entry name" value="P-loop_NTPase"/>
</dbReference>
<dbReference type="NCBIfam" id="TIGR01039">
    <property type="entry name" value="atpD"/>
    <property type="match status" value="1"/>
</dbReference>
<dbReference type="PANTHER" id="PTHR15184">
    <property type="entry name" value="ATP SYNTHASE"/>
    <property type="match status" value="1"/>
</dbReference>
<dbReference type="PANTHER" id="PTHR15184:SF71">
    <property type="entry name" value="ATP SYNTHASE SUBUNIT BETA, MITOCHONDRIAL"/>
    <property type="match status" value="1"/>
</dbReference>
<dbReference type="Pfam" id="PF00006">
    <property type="entry name" value="ATP-synt_ab"/>
    <property type="match status" value="1"/>
</dbReference>
<dbReference type="Pfam" id="PF02874">
    <property type="entry name" value="ATP-synt_ab_N"/>
    <property type="match status" value="1"/>
</dbReference>
<dbReference type="Pfam" id="PF22919">
    <property type="entry name" value="ATP-synt_VA_C"/>
    <property type="match status" value="1"/>
</dbReference>
<dbReference type="PIRSF" id="PIRSF039072">
    <property type="entry name" value="ATPase_subunit_beta"/>
    <property type="match status" value="1"/>
</dbReference>
<dbReference type="SMART" id="SM00382">
    <property type="entry name" value="AAA"/>
    <property type="match status" value="1"/>
</dbReference>
<dbReference type="SUPFAM" id="SSF47917">
    <property type="entry name" value="C-terminal domain of alpha and beta subunits of F1 ATP synthase"/>
    <property type="match status" value="1"/>
</dbReference>
<dbReference type="SUPFAM" id="SSF50615">
    <property type="entry name" value="N-terminal domain of alpha and beta subunits of F1 ATP synthase"/>
    <property type="match status" value="1"/>
</dbReference>
<dbReference type="SUPFAM" id="SSF52540">
    <property type="entry name" value="P-loop containing nucleoside triphosphate hydrolases"/>
    <property type="match status" value="1"/>
</dbReference>
<dbReference type="PROSITE" id="PS00152">
    <property type="entry name" value="ATPASE_ALPHA_BETA"/>
    <property type="match status" value="1"/>
</dbReference>
<protein>
    <recommendedName>
        <fullName evidence="14">ATP synthase F(1) complex subunit beta, mitochondrial</fullName>
        <ecNumber evidence="15">7.1.2.2</ecNumber>
    </recommendedName>
    <alternativeName>
        <fullName evidence="18">ATP synthase F1 subunit beta</fullName>
    </alternativeName>
</protein>
<organism>
    <name type="scientific">Homo sapiens</name>
    <name type="common">Human</name>
    <dbReference type="NCBI Taxonomy" id="9606"/>
    <lineage>
        <taxon>Eukaryota</taxon>
        <taxon>Metazoa</taxon>
        <taxon>Chordata</taxon>
        <taxon>Craniata</taxon>
        <taxon>Vertebrata</taxon>
        <taxon>Euteleostomi</taxon>
        <taxon>Mammalia</taxon>
        <taxon>Eutheria</taxon>
        <taxon>Euarchontoglires</taxon>
        <taxon>Primates</taxon>
        <taxon>Haplorrhini</taxon>
        <taxon>Catarrhini</taxon>
        <taxon>Hominidae</taxon>
        <taxon>Homo</taxon>
    </lineage>
</organism>
<sequence length="529" mass="56560">MLGFVGRVAAAPASGALRRLTPSASLPPAQLLLRAAPTAVHPVRDYAAQTSPSPKAGAATGRIVAVIGAVVDVQFDEGLPPILNALEVQGRETRLVLEVAQHLGESTVRTIAMDGTEGLVRGQKVLDSGAPIKIPVGPETLGRIMNVIGEPIDERGPIKTKQFAPIHAEAPEFMEMSVEQEILVTGIKVVDLLAPYAKGGKIGLFGGAGVGKTVLIMELINNVAKAHGGYSVFAGVGERTREGNDLYHEMIESGVINLKDATSKVALVYGQMNEPPGARARVALTGLTVAEYFRDQEGQDVLLFIDNIFRFTQAGSEVSALLGRIPSAVGYQPTLATDMGTMQERITTTKKGSITSVQAIYVPADDLTDPAPATTFAHLDATTVLSRAIAELGIYPAVDPLDSTSRIMDPNIVGSEHYDVARGVQKILQDYKSLQDIIAILGMDELSEEDKLTVSRARKIQRFLSQPFQVAEVFTGHMGKLVPLKETIKGFQQILAGEYDHLPEQAFYMVGPIEEAVAKADKLAEEHSS</sequence>
<keyword id="KW-0002">3D-structure</keyword>
<keyword id="KW-0007">Acetylation</keyword>
<keyword id="KW-0066">ATP synthesis</keyword>
<keyword id="KW-0067">ATP-binding</keyword>
<keyword id="KW-0139">CF(1)</keyword>
<keyword id="KW-0903">Direct protein sequencing</keyword>
<keyword id="KW-0225">Disease variant</keyword>
<keyword id="KW-0325">Glycoprotein</keyword>
<keyword id="KW-0375">Hydrogen ion transport</keyword>
<keyword id="KW-0406">Ion transport</keyword>
<keyword id="KW-0460">Magnesium</keyword>
<keyword id="KW-0472">Membrane</keyword>
<keyword id="KW-0479">Metal-binding</keyword>
<keyword id="KW-0496">Mitochondrion</keyword>
<keyword id="KW-0999">Mitochondrion inner membrane</keyword>
<keyword id="KW-0547">Nucleotide-binding</keyword>
<keyword id="KW-0597">Phosphoprotein</keyword>
<keyword id="KW-1267">Proteomics identification</keyword>
<keyword id="KW-1185">Reference proteome</keyword>
<keyword id="KW-0809">Transit peptide</keyword>
<keyword id="KW-1278">Translocase</keyword>
<keyword id="KW-0813">Transport</keyword>
<proteinExistence type="evidence at protein level"/>
<feature type="transit peptide" description="Mitochondrion" evidence="6">
    <location>
        <begin position="1"/>
        <end position="47"/>
    </location>
</feature>
<feature type="chain" id="PRO_0000002443" description="ATP synthase F(1) complex subunit beta, mitochondrial">
    <location>
        <begin position="48"/>
        <end position="529"/>
    </location>
</feature>
<feature type="binding site" evidence="13 26 27">
    <location>
        <position position="209"/>
    </location>
    <ligand>
        <name>ADP</name>
        <dbReference type="ChEBI" id="CHEBI:456216"/>
    </ligand>
</feature>
<feature type="binding site" evidence="2">
    <location>
        <position position="209"/>
    </location>
    <ligand>
        <name>ATP</name>
        <dbReference type="ChEBI" id="CHEBI:30616"/>
    </ligand>
</feature>
<feature type="binding site" evidence="2">
    <location>
        <position position="209"/>
    </location>
    <ligand>
        <name>phosphate</name>
        <dbReference type="ChEBI" id="CHEBI:43474"/>
    </ligand>
</feature>
<feature type="binding site" evidence="2">
    <location>
        <position position="210"/>
    </location>
    <ligand>
        <name>ADP</name>
        <dbReference type="ChEBI" id="CHEBI:456216"/>
    </ligand>
</feature>
<feature type="binding site" evidence="2">
    <location>
        <position position="210"/>
    </location>
    <ligand>
        <name>phosphate</name>
        <dbReference type="ChEBI" id="CHEBI:43474"/>
    </ligand>
</feature>
<feature type="binding site" evidence="13 26 27">
    <location>
        <position position="211"/>
    </location>
    <ligand>
        <name>ADP</name>
        <dbReference type="ChEBI" id="CHEBI:456216"/>
    </ligand>
</feature>
<feature type="binding site" evidence="2">
    <location>
        <position position="211"/>
    </location>
    <ligand>
        <name>ATP</name>
        <dbReference type="ChEBI" id="CHEBI:30616"/>
    </ligand>
</feature>
<feature type="binding site" evidence="2">
    <location>
        <position position="211"/>
    </location>
    <ligand>
        <name>phosphate</name>
        <dbReference type="ChEBI" id="CHEBI:43474"/>
    </ligand>
</feature>
<feature type="binding site" evidence="13 26 27">
    <location>
        <position position="212"/>
    </location>
    <ligand>
        <name>ADP</name>
        <dbReference type="ChEBI" id="CHEBI:456216"/>
    </ligand>
</feature>
<feature type="binding site" evidence="2">
    <location>
        <position position="212"/>
    </location>
    <ligand>
        <name>ATP</name>
        <dbReference type="ChEBI" id="CHEBI:30616"/>
    </ligand>
</feature>
<feature type="binding site" evidence="2">
    <location>
        <position position="212"/>
    </location>
    <ligand>
        <name>phosphate</name>
        <dbReference type="ChEBI" id="CHEBI:43474"/>
    </ligand>
</feature>
<feature type="binding site" evidence="13 26 27">
    <location>
        <position position="213"/>
    </location>
    <ligand>
        <name>ADP</name>
        <dbReference type="ChEBI" id="CHEBI:456216"/>
    </ligand>
</feature>
<feature type="binding site" evidence="2">
    <location>
        <position position="213"/>
    </location>
    <ligand>
        <name>ATP</name>
        <dbReference type="ChEBI" id="CHEBI:30616"/>
    </ligand>
</feature>
<feature type="binding site" evidence="13 26 27">
    <location>
        <position position="213"/>
    </location>
    <ligand>
        <name>Mg(2+)</name>
        <dbReference type="ChEBI" id="CHEBI:18420"/>
        <label>1</label>
        <note>ligand shared between two neighboring subunits</note>
    </ligand>
</feature>
<feature type="binding site" evidence="2">
    <location>
        <position position="213"/>
    </location>
    <ligand>
        <name>phosphate</name>
        <dbReference type="ChEBI" id="CHEBI:43474"/>
    </ligand>
</feature>
<feature type="binding site" evidence="13 26 27">
    <location>
        <position position="214"/>
    </location>
    <ligand>
        <name>ADP</name>
        <dbReference type="ChEBI" id="CHEBI:456216"/>
    </ligand>
</feature>
<feature type="binding site" evidence="2">
    <location>
        <position position="214"/>
    </location>
    <ligand>
        <name>ATP</name>
        <dbReference type="ChEBI" id="CHEBI:30616"/>
    </ligand>
</feature>
<feature type="binding site" evidence="2">
    <location>
        <position position="238"/>
    </location>
    <ligand>
        <name>Mg(2+)</name>
        <dbReference type="ChEBI" id="CHEBI:18420"/>
        <label>2</label>
        <note>ligand shared between two neighboring subunits</note>
    </ligand>
</feature>
<feature type="binding site" evidence="2">
    <location>
        <position position="239"/>
    </location>
    <ligand>
        <name>ATP</name>
        <dbReference type="ChEBI" id="CHEBI:30616"/>
    </ligand>
</feature>
<feature type="modified residue" description="N6-acetyllysine; alternate" evidence="5">
    <location>
        <position position="124"/>
    </location>
</feature>
<feature type="modified residue" description="N6-succinyllysine; alternate" evidence="5">
    <location>
        <position position="124"/>
    </location>
</feature>
<feature type="modified residue" description="N6-acetyllysine; alternate" evidence="28">
    <location>
        <position position="133"/>
    </location>
</feature>
<feature type="modified residue" description="N6-succinyllysine; alternate" evidence="5">
    <location>
        <position position="133"/>
    </location>
</feature>
<feature type="modified residue" description="N6-acetyllysine; alternate" evidence="5">
    <location>
        <position position="161"/>
    </location>
</feature>
<feature type="modified residue" description="N6-succinyllysine; alternate" evidence="5">
    <location>
        <position position="161"/>
    </location>
</feature>
<feature type="modified residue" description="N6-acetyllysine" evidence="28">
    <location>
        <position position="198"/>
    </location>
</feature>
<feature type="modified residue" description="N6-acetyllysine; alternate" evidence="5">
    <location>
        <position position="259"/>
    </location>
</feature>
<feature type="modified residue" description="N6-succinyllysine; alternate" evidence="5">
    <location>
        <position position="259"/>
    </location>
</feature>
<feature type="modified residue" description="N6-acetyllysine; alternate" evidence="5">
    <location>
        <position position="264"/>
    </location>
</feature>
<feature type="modified residue" description="N6-succinyllysine; alternate" evidence="5">
    <location>
        <position position="264"/>
    </location>
</feature>
<feature type="modified residue" description="Phosphothreonine" evidence="5">
    <location>
        <position position="312"/>
    </location>
</feature>
<feature type="modified residue" description="Phosphoserine" evidence="29 30">
    <location>
        <position position="415"/>
    </location>
</feature>
<feature type="modified residue" description="N6-acetyllysine" evidence="28">
    <location>
        <position position="426"/>
    </location>
</feature>
<feature type="modified residue" description="Phosphoserine" evidence="3">
    <location>
        <position position="433"/>
    </location>
</feature>
<feature type="modified residue" description="N6-acetyllysine" evidence="5">
    <location>
        <position position="480"/>
    </location>
</feature>
<feature type="modified residue" description="N6-acetyllysine" evidence="5">
    <location>
        <position position="485"/>
    </location>
</feature>
<feature type="modified residue" description="N6-acetyllysine; alternate" evidence="5">
    <location>
        <position position="522"/>
    </location>
</feature>
<feature type="modified residue" description="N6-succinyllysine; alternate" evidence="5">
    <location>
        <position position="522"/>
    </location>
</feature>
<feature type="modified residue" description="Phosphoserine" evidence="30">
    <location>
        <position position="529"/>
    </location>
</feature>
<feature type="glycosylation site" description="O-linked (GlcNAc) serine" evidence="1">
    <location>
        <position position="106"/>
    </location>
</feature>
<feature type="sequence variant" id="VAR_074188" evidence="8">
    <original>A</original>
    <variation>V</variation>
    <location>
        <position position="130"/>
    </location>
</feature>
<feature type="sequence variant" id="VAR_048371" description="In dbSNP:rs1042001." evidence="9 10">
    <original>E</original>
    <variation>Q</variation>
    <location>
        <position position="274"/>
    </location>
</feature>
<feature type="sequence variant" id="VAR_087864" description="In HUMOP2; elevated baseline extracellular acidification rate; increased glucose consumption; increased lactate release." evidence="12">
    <original>L</original>
    <variation>P</variation>
    <location>
        <position position="335"/>
    </location>
</feature>
<feature type="sequence conflict" description="In Ref. 3; BAA00016/CAA27246." evidence="14" ref="3">
    <original>MLGFVG</original>
    <variation>MTSLWGKGTGCKLFKF</variation>
    <location>
        <begin position="1"/>
        <end position="6"/>
    </location>
</feature>
<feature type="sequence conflict" description="In Ref. 2; AAA51808." evidence="14" ref="2">
    <original>APTAV</original>
    <variation>VRRRF</variation>
    <location>
        <begin position="36"/>
        <end position="40"/>
    </location>
</feature>
<feature type="sequence conflict" description="In Ref. 3; BAA00016/CAA27246." evidence="14" ref="3">
    <original>APTAV</original>
    <variation>VRRRS</variation>
    <location>
        <begin position="36"/>
        <end position="40"/>
    </location>
</feature>
<feature type="sequence conflict" description="In Ref. 2; AAA51808." evidence="14" ref="2">
    <original>API</original>
    <variation>DQL</variation>
    <location>
        <begin position="130"/>
        <end position="132"/>
    </location>
</feature>
<feature type="sequence conflict" description="In Ref. 2; AAA51808." evidence="14" ref="2">
    <original>H</original>
    <variation>D</variation>
    <location>
        <position position="378"/>
    </location>
</feature>
<feature type="sequence conflict" description="In Ref. 2; AAA51808." evidence="14" ref="2">
    <original>Q</original>
    <variation>H</variation>
    <location>
        <position position="435"/>
    </location>
</feature>
<feature type="strand" evidence="31">
    <location>
        <begin position="60"/>
        <end position="67"/>
    </location>
</feature>
<feature type="strand" evidence="31">
    <location>
        <begin position="70"/>
        <end position="77"/>
    </location>
</feature>
<feature type="strand" evidence="31">
    <location>
        <begin position="85"/>
        <end position="90"/>
    </location>
</feature>
<feature type="strand" evidence="31">
    <location>
        <begin position="96"/>
        <end position="104"/>
    </location>
</feature>
<feature type="strand" evidence="31">
    <location>
        <begin position="107"/>
        <end position="114"/>
    </location>
</feature>
<feature type="strand" evidence="31">
    <location>
        <begin position="124"/>
        <end position="127"/>
    </location>
</feature>
<feature type="strand" evidence="31">
    <location>
        <begin position="129"/>
        <end position="131"/>
    </location>
</feature>
<feature type="strand" evidence="31">
    <location>
        <begin position="133"/>
        <end position="137"/>
    </location>
</feature>
<feature type="helix" evidence="31">
    <location>
        <begin position="138"/>
        <end position="140"/>
    </location>
</feature>
<feature type="strand" evidence="31">
    <location>
        <begin position="153"/>
        <end position="155"/>
    </location>
</feature>
<feature type="strand" evidence="31">
    <location>
        <begin position="161"/>
        <end position="166"/>
    </location>
</feature>
<feature type="helix" evidence="31">
    <location>
        <begin position="173"/>
        <end position="175"/>
    </location>
</feature>
<feature type="helix" evidence="31">
    <location>
        <begin position="188"/>
        <end position="193"/>
    </location>
</feature>
<feature type="strand" evidence="31">
    <location>
        <begin position="201"/>
        <end position="204"/>
    </location>
</feature>
<feature type="helix" evidence="31">
    <location>
        <begin position="212"/>
        <end position="226"/>
    </location>
</feature>
<feature type="strand" evidence="31">
    <location>
        <begin position="231"/>
        <end position="238"/>
    </location>
</feature>
<feature type="helix" evidence="31">
    <location>
        <begin position="240"/>
        <end position="252"/>
    </location>
</feature>
<feature type="strand" evidence="31">
    <location>
        <begin position="258"/>
        <end position="261"/>
    </location>
</feature>
<feature type="strand" evidence="31">
    <location>
        <begin position="265"/>
        <end position="271"/>
    </location>
</feature>
<feature type="helix" evidence="31">
    <location>
        <begin position="276"/>
        <end position="295"/>
    </location>
</feature>
<feature type="strand" evidence="31">
    <location>
        <begin position="300"/>
        <end position="306"/>
    </location>
</feature>
<feature type="helix" evidence="31">
    <location>
        <begin position="309"/>
        <end position="321"/>
    </location>
</feature>
<feature type="helix" evidence="31">
    <location>
        <begin position="335"/>
        <end position="343"/>
    </location>
</feature>
<feature type="strand" evidence="31">
    <location>
        <begin position="353"/>
        <end position="359"/>
    </location>
</feature>
<feature type="helix" evidence="31">
    <location>
        <begin position="363"/>
        <end position="365"/>
    </location>
</feature>
<feature type="helix" evidence="31">
    <location>
        <begin position="370"/>
        <end position="376"/>
    </location>
</feature>
<feature type="strand" evidence="31">
    <location>
        <begin position="379"/>
        <end position="383"/>
    </location>
</feature>
<feature type="helix" evidence="31">
    <location>
        <begin position="388"/>
        <end position="391"/>
    </location>
</feature>
<feature type="turn" evidence="31">
    <location>
        <begin position="400"/>
        <end position="402"/>
    </location>
</feature>
<feature type="helix" evidence="31">
    <location>
        <begin position="410"/>
        <end position="437"/>
    </location>
</feature>
<feature type="helix" evidence="31">
    <location>
        <begin position="450"/>
        <end position="464"/>
    </location>
</feature>
<feature type="helix" evidence="31">
    <location>
        <begin position="469"/>
        <end position="471"/>
    </location>
</feature>
<feature type="helix" evidence="31">
    <location>
        <begin position="472"/>
        <end position="475"/>
    </location>
</feature>
<feature type="helix" evidence="31">
    <location>
        <begin position="484"/>
        <end position="495"/>
    </location>
</feature>
<feature type="turn" evidence="31">
    <location>
        <begin position="496"/>
        <end position="499"/>
    </location>
</feature>
<feature type="strand" evidence="31">
    <location>
        <begin position="500"/>
        <end position="502"/>
    </location>
</feature>
<feature type="helix" evidence="31">
    <location>
        <begin position="504"/>
        <end position="507"/>
    </location>
</feature>
<feature type="helix" evidence="31">
    <location>
        <begin position="513"/>
        <end position="521"/>
    </location>
</feature>